<name>ISCS_PSYIN</name>
<gene>
    <name evidence="1" type="primary">iscS</name>
    <name type="ordered locus">Ping_1324</name>
</gene>
<comment type="function">
    <text evidence="1">Master enzyme that delivers sulfur to a number of partners involved in Fe-S cluster assembly, tRNA modification or cofactor biosynthesis. Catalyzes the removal of elemental sulfur atoms from cysteine to produce alanine. Functions as a sulfur delivery protein for Fe-S cluster synthesis onto IscU, an Fe-S scaffold assembly protein, as well as other S acceptor proteins.</text>
</comment>
<comment type="catalytic activity">
    <reaction evidence="1">
        <text>(sulfur carrier)-H + L-cysteine = (sulfur carrier)-SH + L-alanine</text>
        <dbReference type="Rhea" id="RHEA:43892"/>
        <dbReference type="Rhea" id="RHEA-COMP:14737"/>
        <dbReference type="Rhea" id="RHEA-COMP:14739"/>
        <dbReference type="ChEBI" id="CHEBI:29917"/>
        <dbReference type="ChEBI" id="CHEBI:35235"/>
        <dbReference type="ChEBI" id="CHEBI:57972"/>
        <dbReference type="ChEBI" id="CHEBI:64428"/>
        <dbReference type="EC" id="2.8.1.7"/>
    </reaction>
</comment>
<comment type="cofactor">
    <cofactor evidence="1">
        <name>pyridoxal 5'-phosphate</name>
        <dbReference type="ChEBI" id="CHEBI:597326"/>
    </cofactor>
</comment>
<comment type="pathway">
    <text evidence="1">Cofactor biosynthesis; iron-sulfur cluster biosynthesis.</text>
</comment>
<comment type="subunit">
    <text evidence="1">Homodimer. Forms a heterotetramer with IscU, interacts with other sulfur acceptors.</text>
</comment>
<comment type="subcellular location">
    <subcellularLocation>
        <location evidence="1">Cytoplasm</location>
    </subcellularLocation>
</comment>
<comment type="similarity">
    <text evidence="1">Belongs to the class-V pyridoxal-phosphate-dependent aminotransferase family. NifS/IscS subfamily.</text>
</comment>
<accession>A1SUI4</accession>
<evidence type="ECO:0000255" key="1">
    <source>
        <dbReference type="HAMAP-Rule" id="MF_00331"/>
    </source>
</evidence>
<protein>
    <recommendedName>
        <fullName evidence="1">Cysteine desulfurase IscS</fullName>
        <ecNumber evidence="1">2.8.1.7</ecNumber>
    </recommendedName>
</protein>
<organism>
    <name type="scientific">Psychromonas ingrahamii (strain DSM 17664 / CCUG 51855 / 37)</name>
    <dbReference type="NCBI Taxonomy" id="357804"/>
    <lineage>
        <taxon>Bacteria</taxon>
        <taxon>Pseudomonadati</taxon>
        <taxon>Pseudomonadota</taxon>
        <taxon>Gammaproteobacteria</taxon>
        <taxon>Alteromonadales</taxon>
        <taxon>Psychromonadaceae</taxon>
        <taxon>Psychromonas</taxon>
    </lineage>
</organism>
<sequence>MKLPIYLDYSSTTPVDPRVAEKMMQYLTPGGEFGNPASRSHRFGWHAEEAVDVAREQIADLISGDPREIVFTSGATESNNLAIKGAAHFYVKKGKHIITAKTEHKAVLDTCRQLEREGYEVTYLDPKEDGIVTPQQLKEVLRPDTVLVSLMHVNNEIGVIQDIAGFGELCRANKTIFHVDASQSVGKIEIDTQALKVDLMSFSAHKIYGPKGIGALYVSRKPRVRLEAQMHGGGHERGMRSGTLPTHQIAAMGEAFRIAKEEMASDEVRILALRTRLLNGVNDMEEVYVNGSLENRIAGNINISFNYVEGESLVMALKDLAVSSGSACTSASLEPSYVLRAIGRDDELAHSSIRFSIGRFTTEEEIDYAINIIRKNIGRLRDMSPLWDMYKEGIDIKSIEWSH</sequence>
<feature type="chain" id="PRO_1000019432" description="Cysteine desulfurase IscS">
    <location>
        <begin position="1"/>
        <end position="403"/>
    </location>
</feature>
<feature type="active site" description="Cysteine persulfide intermediate" evidence="1">
    <location>
        <position position="328"/>
    </location>
</feature>
<feature type="binding site" evidence="1">
    <location>
        <begin position="75"/>
        <end position="76"/>
    </location>
    <ligand>
        <name>pyridoxal 5'-phosphate</name>
        <dbReference type="ChEBI" id="CHEBI:597326"/>
    </ligand>
</feature>
<feature type="binding site" evidence="1">
    <location>
        <position position="155"/>
    </location>
    <ligand>
        <name>pyridoxal 5'-phosphate</name>
        <dbReference type="ChEBI" id="CHEBI:597326"/>
    </ligand>
</feature>
<feature type="binding site" evidence="1">
    <location>
        <position position="183"/>
    </location>
    <ligand>
        <name>pyridoxal 5'-phosphate</name>
        <dbReference type="ChEBI" id="CHEBI:597326"/>
    </ligand>
</feature>
<feature type="binding site" evidence="1">
    <location>
        <begin position="203"/>
        <end position="205"/>
    </location>
    <ligand>
        <name>pyridoxal 5'-phosphate</name>
        <dbReference type="ChEBI" id="CHEBI:597326"/>
    </ligand>
</feature>
<feature type="binding site" evidence="1">
    <location>
        <position position="243"/>
    </location>
    <ligand>
        <name>pyridoxal 5'-phosphate</name>
        <dbReference type="ChEBI" id="CHEBI:597326"/>
    </ligand>
</feature>
<feature type="binding site" description="via persulfide group" evidence="1">
    <location>
        <position position="328"/>
    </location>
    <ligand>
        <name>[2Fe-2S] cluster</name>
        <dbReference type="ChEBI" id="CHEBI:190135"/>
        <note>ligand shared with IscU</note>
    </ligand>
</feature>
<feature type="modified residue" description="N6-(pyridoxal phosphate)lysine" evidence="1">
    <location>
        <position position="206"/>
    </location>
</feature>
<keyword id="KW-0001">2Fe-2S</keyword>
<keyword id="KW-0963">Cytoplasm</keyword>
<keyword id="KW-0408">Iron</keyword>
<keyword id="KW-0411">Iron-sulfur</keyword>
<keyword id="KW-0479">Metal-binding</keyword>
<keyword id="KW-0663">Pyridoxal phosphate</keyword>
<keyword id="KW-1185">Reference proteome</keyword>
<keyword id="KW-0808">Transferase</keyword>
<dbReference type="EC" id="2.8.1.7" evidence="1"/>
<dbReference type="EMBL" id="CP000510">
    <property type="protein sequence ID" value="ABM03149.1"/>
    <property type="molecule type" value="Genomic_DNA"/>
</dbReference>
<dbReference type="RefSeq" id="WP_011769712.1">
    <property type="nucleotide sequence ID" value="NC_008709.1"/>
</dbReference>
<dbReference type="SMR" id="A1SUI4"/>
<dbReference type="STRING" id="357804.Ping_1324"/>
<dbReference type="KEGG" id="pin:Ping_1324"/>
<dbReference type="eggNOG" id="COG1104">
    <property type="taxonomic scope" value="Bacteria"/>
</dbReference>
<dbReference type="HOGENOM" id="CLU_003433_0_2_6"/>
<dbReference type="OrthoDB" id="9808002at2"/>
<dbReference type="UniPathway" id="UPA00266"/>
<dbReference type="Proteomes" id="UP000000639">
    <property type="component" value="Chromosome"/>
</dbReference>
<dbReference type="GO" id="GO:1990221">
    <property type="term" value="C:L-cysteine desulfurase complex"/>
    <property type="evidence" value="ECO:0007669"/>
    <property type="project" value="UniProtKB-ARBA"/>
</dbReference>
<dbReference type="GO" id="GO:0051537">
    <property type="term" value="F:2 iron, 2 sulfur cluster binding"/>
    <property type="evidence" value="ECO:0007669"/>
    <property type="project" value="UniProtKB-UniRule"/>
</dbReference>
<dbReference type="GO" id="GO:0031071">
    <property type="term" value="F:cysteine desulfurase activity"/>
    <property type="evidence" value="ECO:0007669"/>
    <property type="project" value="UniProtKB-UniRule"/>
</dbReference>
<dbReference type="GO" id="GO:0046872">
    <property type="term" value="F:metal ion binding"/>
    <property type="evidence" value="ECO:0007669"/>
    <property type="project" value="UniProtKB-KW"/>
</dbReference>
<dbReference type="GO" id="GO:0030170">
    <property type="term" value="F:pyridoxal phosphate binding"/>
    <property type="evidence" value="ECO:0007669"/>
    <property type="project" value="UniProtKB-UniRule"/>
</dbReference>
<dbReference type="GO" id="GO:0044571">
    <property type="term" value="P:[2Fe-2S] cluster assembly"/>
    <property type="evidence" value="ECO:0007669"/>
    <property type="project" value="UniProtKB-UniRule"/>
</dbReference>
<dbReference type="FunFam" id="3.40.640.10:FF:000003">
    <property type="entry name" value="Cysteine desulfurase IscS"/>
    <property type="match status" value="1"/>
</dbReference>
<dbReference type="FunFam" id="3.90.1150.10:FF:000002">
    <property type="entry name" value="Cysteine desulfurase IscS"/>
    <property type="match status" value="1"/>
</dbReference>
<dbReference type="Gene3D" id="3.90.1150.10">
    <property type="entry name" value="Aspartate Aminotransferase, domain 1"/>
    <property type="match status" value="1"/>
</dbReference>
<dbReference type="Gene3D" id="3.40.640.10">
    <property type="entry name" value="Type I PLP-dependent aspartate aminotransferase-like (Major domain)"/>
    <property type="match status" value="1"/>
</dbReference>
<dbReference type="HAMAP" id="MF_00331">
    <property type="entry name" value="Cys_desulf_IscS"/>
    <property type="match status" value="1"/>
</dbReference>
<dbReference type="InterPro" id="IPR000192">
    <property type="entry name" value="Aminotrans_V_dom"/>
</dbReference>
<dbReference type="InterPro" id="IPR020578">
    <property type="entry name" value="Aminotrans_V_PyrdxlP_BS"/>
</dbReference>
<dbReference type="InterPro" id="IPR010240">
    <property type="entry name" value="Cys_deSase_IscS"/>
</dbReference>
<dbReference type="InterPro" id="IPR016454">
    <property type="entry name" value="Cysteine_dSase"/>
</dbReference>
<dbReference type="InterPro" id="IPR015424">
    <property type="entry name" value="PyrdxlP-dep_Trfase"/>
</dbReference>
<dbReference type="InterPro" id="IPR015421">
    <property type="entry name" value="PyrdxlP-dep_Trfase_major"/>
</dbReference>
<dbReference type="InterPro" id="IPR015422">
    <property type="entry name" value="PyrdxlP-dep_Trfase_small"/>
</dbReference>
<dbReference type="NCBIfam" id="TIGR02006">
    <property type="entry name" value="IscS"/>
    <property type="match status" value="1"/>
</dbReference>
<dbReference type="NCBIfam" id="NF010611">
    <property type="entry name" value="PRK14012.1"/>
    <property type="match status" value="1"/>
</dbReference>
<dbReference type="PANTHER" id="PTHR11601:SF34">
    <property type="entry name" value="CYSTEINE DESULFURASE"/>
    <property type="match status" value="1"/>
</dbReference>
<dbReference type="PANTHER" id="PTHR11601">
    <property type="entry name" value="CYSTEINE DESULFURYLASE FAMILY MEMBER"/>
    <property type="match status" value="1"/>
</dbReference>
<dbReference type="Pfam" id="PF00266">
    <property type="entry name" value="Aminotran_5"/>
    <property type="match status" value="1"/>
</dbReference>
<dbReference type="PIRSF" id="PIRSF005572">
    <property type="entry name" value="NifS"/>
    <property type="match status" value="1"/>
</dbReference>
<dbReference type="SUPFAM" id="SSF53383">
    <property type="entry name" value="PLP-dependent transferases"/>
    <property type="match status" value="1"/>
</dbReference>
<dbReference type="PROSITE" id="PS00595">
    <property type="entry name" value="AA_TRANSFER_CLASS_5"/>
    <property type="match status" value="1"/>
</dbReference>
<reference key="1">
    <citation type="journal article" date="2008" name="BMC Genomics">
        <title>Genomics of an extreme psychrophile, Psychromonas ingrahamii.</title>
        <authorList>
            <person name="Riley M."/>
            <person name="Staley J.T."/>
            <person name="Danchin A."/>
            <person name="Wang T.Z."/>
            <person name="Brettin T.S."/>
            <person name="Hauser L.J."/>
            <person name="Land M.L."/>
            <person name="Thompson L.S."/>
        </authorList>
    </citation>
    <scope>NUCLEOTIDE SEQUENCE [LARGE SCALE GENOMIC DNA]</scope>
    <source>
        <strain>DSM 17664 / CCUG 51855 / 37</strain>
    </source>
</reference>
<proteinExistence type="inferred from homology"/>